<feature type="chain" id="PRO_0000112854" description="Auxin-responsive protein IAA28">
    <location>
        <begin position="1"/>
        <end position="175"/>
    </location>
</feature>
<feature type="domain" description="PB1" evidence="2">
    <location>
        <begin position="80"/>
        <end position="161"/>
    </location>
</feature>
<feature type="region of interest" description="Disordered" evidence="3">
    <location>
        <begin position="1"/>
        <end position="39"/>
    </location>
</feature>
<feature type="short sequence motif" description="EAR-like (transcriptional repression)">
    <location>
        <begin position="7"/>
        <end position="11"/>
    </location>
</feature>
<feature type="compositionally biased region" description="Polar residues" evidence="3">
    <location>
        <begin position="17"/>
        <end position="39"/>
    </location>
</feature>
<feature type="mutagenesis site" description="In iaa28-1; gain of function. Affects auxin-related developmental processes.">
    <original>P</original>
    <variation>L</variation>
    <location>
        <position position="53"/>
    </location>
</feature>
<comment type="function">
    <text evidence="4">Aux/IAA proteins are short-lived transcriptional factors that function as repressors of early auxin response genes at low auxin concentrations. Repression is thought to result from the interaction with auxin response factors (ARFs), proteins that bind to the auxin-responsive promoter element (AuxRE). Formation of heterodimers with ARF proteins may alter their ability to modulate early auxin response genes expression.</text>
</comment>
<comment type="subunit">
    <text evidence="1 5">Homodimers and heterodimers (By similarity). Interacts with TPL.</text>
</comment>
<comment type="interaction">
    <interactant intactId="EBI-3133404">
        <id>Q9XFM0</id>
    </interactant>
    <interactant intactId="EBI-3946783">
        <id>Q9C5W9</id>
        <label>ARF18</label>
    </interactant>
    <organismsDiffer>false</organismsDiffer>
    <experiments>11</experiments>
</comment>
<comment type="interaction">
    <interactant intactId="EBI-3133404">
        <id>Q9XFM0</id>
    </interactant>
    <interactant intactId="EBI-529887">
        <id>Q8RYC8</id>
        <label>ARF19</label>
    </interactant>
    <organismsDiffer>false</organismsDiffer>
    <experiments>3</experiments>
</comment>
<comment type="interaction">
    <interactant intactId="EBI-3133404">
        <id>Q9XFM0</id>
    </interactant>
    <interactant intactId="EBI-3946770">
        <id>Q9ZTX8</id>
        <label>ARF6</label>
    </interactant>
    <organismsDiffer>false</organismsDiffer>
    <experiments>3</experiments>
</comment>
<comment type="interaction">
    <interactant intactId="EBI-3133404">
        <id>Q9XFM0</id>
    </interactant>
    <interactant intactId="EBI-3946762">
        <id>Q9XED8</id>
        <label>ARF9</label>
    </interactant>
    <organismsDiffer>false</organismsDiffer>
    <experiments>3</experiments>
</comment>
<comment type="interaction">
    <interactant intactId="EBI-3133404">
        <id>Q9XFM0</id>
    </interactant>
    <interactant intactId="EBI-1100737">
        <id>Q8L9Y3</id>
        <label>ARR14</label>
    </interactant>
    <organismsDiffer>false</organismsDiffer>
    <experiments>3</experiments>
</comment>
<comment type="interaction">
    <interactant intactId="EBI-3133404">
        <id>Q9XFM0</id>
    </interactant>
    <interactant intactId="EBI-25527280">
        <id>Q9FWS3</id>
        <label>CG1</label>
    </interactant>
    <organismsDiffer>false</organismsDiffer>
    <experiments>3</experiments>
</comment>
<comment type="interaction">
    <interactant intactId="EBI-3133404">
        <id>Q9XFM0</id>
    </interactant>
    <interactant intactId="EBI-25516131">
        <id>Q9FN91</id>
        <label>EXO70H7</label>
    </interactant>
    <organismsDiffer>false</organismsDiffer>
    <experiments>3</experiments>
</comment>
<comment type="interaction">
    <interactant intactId="EBI-3133404">
        <id>Q9XFM0</id>
    </interactant>
    <interactant intactId="EBI-4426378">
        <id>Q39103</id>
        <label>GA3OX1</label>
    </interactant>
    <organismsDiffer>false</organismsDiffer>
    <experiments>5</experiments>
</comment>
<comment type="interaction">
    <interactant intactId="EBI-3133404">
        <id>Q9XFM0</id>
    </interactant>
    <interactant intactId="EBI-4424482">
        <id>Q8H7F6</id>
        <label>GRXS16</label>
    </interactant>
    <organismsDiffer>false</organismsDiffer>
    <experiments>3</experiments>
</comment>
<comment type="interaction">
    <interactant intactId="EBI-3133404">
        <id>Q9XFM0</id>
    </interactant>
    <interactant intactId="EBI-630505">
        <id>P49677</id>
        <label>IAA1</label>
    </interactant>
    <organismsDiffer>false</organismsDiffer>
    <experiments>12</experiments>
</comment>
<comment type="interaction">
    <interactant intactId="EBI-3133404">
        <id>Q9XFM0</id>
    </interactant>
    <interactant intactId="EBI-3946434">
        <id>Q38828</id>
        <label>IAA10</label>
    </interactant>
    <organismsDiffer>false</organismsDiffer>
    <experiments>10</experiments>
</comment>
<comment type="interaction">
    <interactant intactId="EBI-3133404">
        <id>Q9XFM0</id>
    </interactant>
    <interactant intactId="EBI-2367923">
        <id>Q38829</id>
        <label>IAA11</label>
    </interactant>
    <organismsDiffer>false</organismsDiffer>
    <experiments>9</experiments>
</comment>
<comment type="interaction">
    <interactant intactId="EBI-3133404">
        <id>Q9XFM0</id>
    </interactant>
    <interactant intactId="EBI-617608">
        <id>Q38830</id>
        <label>IAA12</label>
    </interactant>
    <organismsDiffer>false</organismsDiffer>
    <experiments>6</experiments>
</comment>
<comment type="interaction">
    <interactant intactId="EBI-3133404">
        <id>Q9XFM0</id>
    </interactant>
    <interactant intactId="EBI-1554143">
        <id>Q38831</id>
        <label>IAA13</label>
    </interactant>
    <organismsDiffer>false</organismsDiffer>
    <experiments>8</experiments>
</comment>
<comment type="interaction">
    <interactant intactId="EBI-3133404">
        <id>Q9XFM0</id>
    </interactant>
    <interactant intactId="EBI-2295562">
        <id>Q38832</id>
        <label>IAA14</label>
    </interactant>
    <organismsDiffer>false</organismsDiffer>
    <experiments>4</experiments>
</comment>
<comment type="interaction">
    <interactant intactId="EBI-3133404">
        <id>Q9XFM0</id>
    </interactant>
    <interactant intactId="EBI-25524519">
        <id>A0A2H1ZEF6</id>
        <label>IAA15</label>
    </interactant>
    <organismsDiffer>false</organismsDiffer>
    <experiments>5</experiments>
</comment>
<comment type="interaction">
    <interactant intactId="EBI-3133404">
        <id>Q9XFM0</id>
    </interactant>
    <interactant intactId="EBI-632231">
        <id>O24407</id>
        <label>IAA16</label>
    </interactant>
    <organismsDiffer>false</organismsDiffer>
    <experiments>10</experiments>
</comment>
<comment type="interaction">
    <interactant intactId="EBI-3133404">
        <id>Q9XFM0</id>
    </interactant>
    <interactant intactId="EBI-632243">
        <id>P93830</id>
        <label>IAA17</label>
    </interactant>
    <organismsDiffer>false</organismsDiffer>
    <experiments>9</experiments>
</comment>
<comment type="interaction">
    <interactant intactId="EBI-3133404">
        <id>Q9XFM0</id>
    </interactant>
    <interactant intactId="EBI-2295525">
        <id>O24408</id>
        <label>IAA18</label>
    </interactant>
    <organismsDiffer>false</organismsDiffer>
    <experiments>7</experiments>
</comment>
<comment type="interaction">
    <interactant intactId="EBI-3133404">
        <id>Q9XFM0</id>
    </interactant>
    <interactant intactId="EBI-632257">
        <id>O24409</id>
        <label>IAA19</label>
    </interactant>
    <organismsDiffer>false</organismsDiffer>
    <experiments>9</experiments>
</comment>
<comment type="interaction">
    <interactant intactId="EBI-3133404">
        <id>Q9XFM0</id>
    </interactant>
    <interactant intactId="EBI-632343">
        <id>P49678</id>
        <label>IAA2</label>
    </interactant>
    <organismsDiffer>false</organismsDiffer>
    <experiments>10</experiments>
</comment>
<comment type="interaction">
    <interactant intactId="EBI-3133404">
        <id>Q9XFM0</id>
    </interactant>
    <interactant intactId="EBI-632272">
        <id>O24410</id>
        <label>IAA20</label>
    </interactant>
    <organismsDiffer>false</organismsDiffer>
    <experiments>6</experiments>
</comment>
<comment type="interaction">
    <interactant intactId="EBI-3133404">
        <id>Q9XFM0</id>
    </interactant>
    <interactant intactId="EBI-3947418">
        <id>Q8LAL2</id>
        <label>IAA26</label>
    </interactant>
    <organismsDiffer>false</organismsDiffer>
    <experiments>8</experiments>
</comment>
<comment type="interaction">
    <interactant intactId="EBI-3133404">
        <id>Q9XFM0</id>
    </interactant>
    <interactant intactId="EBI-3946677">
        <id>Q9ZSY8</id>
        <label>IAA27</label>
    </interactant>
    <organismsDiffer>false</organismsDiffer>
    <experiments>8</experiments>
</comment>
<comment type="interaction">
    <interactant intactId="EBI-3133404">
        <id>Q9XFM0</id>
    </interactant>
    <interactant intactId="EBI-3133404">
        <id>Q9XFM0</id>
        <label>IAA28</label>
    </interactant>
    <organismsDiffer>false</organismsDiffer>
    <experiments>4</experiments>
</comment>
<comment type="interaction">
    <interactant intactId="EBI-3133404">
        <id>Q9XFM0</id>
    </interactant>
    <interactant intactId="EBI-3946697">
        <id>Q93WC4</id>
        <label>IAA29</label>
    </interactant>
    <organismsDiffer>false</organismsDiffer>
    <experiments>5</experiments>
</comment>
<comment type="interaction">
    <interactant intactId="EBI-3133404">
        <id>Q9XFM0</id>
    </interactant>
    <interactant intactId="EBI-307174">
        <id>Q38822</id>
        <label>IAA3</label>
    </interactant>
    <organismsDiffer>false</organismsDiffer>
    <experiments>10</experiments>
</comment>
<comment type="interaction">
    <interactant intactId="EBI-3133404">
        <id>Q9XFM0</id>
    </interactant>
    <interactant intactId="EBI-3946408">
        <id>Q8H174</id>
        <label>IAA31</label>
    </interactant>
    <organismsDiffer>false</organismsDiffer>
    <experiments>8</experiments>
</comment>
<comment type="interaction">
    <interactant intactId="EBI-3133404">
        <id>Q9XFM0</id>
    </interactant>
    <interactant intactId="EBI-3946448">
        <id>Q8RYC6</id>
        <label>IAA32</label>
    </interactant>
    <organismsDiffer>false</organismsDiffer>
    <experiments>5</experiments>
</comment>
<comment type="interaction">
    <interactant intactId="EBI-3133404">
        <id>Q9XFM0</id>
    </interactant>
    <interactant intactId="EBI-3946739">
        <id>Q9FKM7</id>
        <label>IAA33</label>
    </interactant>
    <organismsDiffer>false</organismsDiffer>
    <experiments>7</experiments>
</comment>
<comment type="interaction">
    <interactant intactId="EBI-3133404">
        <id>Q9XFM0</id>
    </interactant>
    <interactant intactId="EBI-3946459">
        <id>Q9C5X0</id>
        <label>IAA34</label>
    </interactant>
    <organismsDiffer>false</organismsDiffer>
    <experiments>8</experiments>
</comment>
<comment type="interaction">
    <interactant intactId="EBI-3133404">
        <id>Q9XFM0</id>
    </interactant>
    <interactant intactId="EBI-632187">
        <id>P33077</id>
        <label>IAA4</label>
    </interactant>
    <organismsDiffer>false</organismsDiffer>
    <experiments>9</experiments>
</comment>
<comment type="interaction">
    <interactant intactId="EBI-3133404">
        <id>Q9XFM0</id>
    </interactant>
    <interactant intactId="EBI-3946487">
        <id>P33078</id>
        <label>IAA5</label>
    </interactant>
    <organismsDiffer>false</organismsDiffer>
    <experiments>6</experiments>
</comment>
<comment type="interaction">
    <interactant intactId="EBI-3133404">
        <id>Q9XFM0</id>
    </interactant>
    <interactant intactId="EBI-1554124">
        <id>Q38824</id>
        <label>IAA6</label>
    </interactant>
    <organismsDiffer>false</organismsDiffer>
    <experiments>9</experiments>
</comment>
<comment type="interaction">
    <interactant intactId="EBI-3133404">
        <id>Q9XFM0</id>
    </interactant>
    <interactant intactId="EBI-602959">
        <id>Q38825</id>
        <label>IAA7</label>
    </interactant>
    <organismsDiffer>false</organismsDiffer>
    <experiments>11</experiments>
</comment>
<comment type="interaction">
    <interactant intactId="EBI-3133404">
        <id>Q9XFM0</id>
    </interactant>
    <interactant intactId="EBI-632200">
        <id>Q38826</id>
        <label>IAA8</label>
    </interactant>
    <organismsDiffer>false</organismsDiffer>
    <experiments>8</experiments>
</comment>
<comment type="interaction">
    <interactant intactId="EBI-3133404">
        <id>Q9XFM0</id>
    </interactant>
    <interactant intactId="EBI-632216">
        <id>Q38827</id>
        <label>IAA9</label>
    </interactant>
    <organismsDiffer>false</organismsDiffer>
    <experiments>4</experiments>
</comment>
<comment type="interaction">
    <interactant intactId="EBI-3133404">
        <id>Q9XFM0</id>
    </interactant>
    <interactant intactId="EBI-25522447">
        <id>Q9MAH8</id>
        <label>TCP3</label>
    </interactant>
    <organismsDiffer>false</organismsDiffer>
    <experiments>3</experiments>
</comment>
<comment type="interaction">
    <interactant intactId="EBI-3133404">
        <id>Q9XFM0</id>
    </interactant>
    <interactant intactId="EBI-4452426">
        <id>Q9FEE2</id>
        <label>TON2</label>
    </interactant>
    <organismsDiffer>false</organismsDiffer>
    <experiments>3</experiments>
</comment>
<comment type="subcellular location">
    <subcellularLocation>
        <location evidence="1">Nucleus</location>
    </subcellularLocation>
</comment>
<comment type="tissue specificity">
    <text>In roots and inflorescence stems.</text>
</comment>
<comment type="induction">
    <text>Not induced by auxin.</text>
</comment>
<comment type="domain">
    <text>The N-terminal half of the protein contains two conserved domains I and II. Domain I includes a slightly degenerated ERF-associated amphiphilic repression (EAR) motif which seems to be involved in the activity of transcriptional repression. Domain II is required for the correct degradation of the protein through the SCF-mediated ubiquitin-proteasome pathway. Interactions between Aux/IAA proteins and auxin response factors (ARFs) occur through their C-terminal dimerization domains III and IV.</text>
</comment>
<comment type="similarity">
    <text evidence="6">Belongs to the Aux/IAA family.</text>
</comment>
<comment type="sequence caution" evidence="6">
    <conflict type="erroneous gene model prediction">
        <sequence resource="EMBL-CDS" id="AAD40120"/>
    </conflict>
</comment>
<proteinExistence type="evidence at protein level"/>
<dbReference type="EMBL" id="AF149816">
    <property type="protein sequence ID" value="AAD34019.1"/>
    <property type="molecule type" value="mRNA"/>
</dbReference>
<dbReference type="EMBL" id="AC005405">
    <property type="status" value="NOT_ANNOTATED_CDS"/>
    <property type="molecule type" value="Genomic_DNA"/>
</dbReference>
<dbReference type="EMBL" id="AF149413">
    <property type="protein sequence ID" value="AAD40120.1"/>
    <property type="status" value="ALT_SEQ"/>
    <property type="molecule type" value="Genomic_DNA"/>
</dbReference>
<dbReference type="EMBL" id="CP002688">
    <property type="protein sequence ID" value="AED93498.1"/>
    <property type="molecule type" value="Genomic_DNA"/>
</dbReference>
<dbReference type="EMBL" id="BT000427">
    <property type="protein sequence ID" value="AAN17404.1"/>
    <property type="molecule type" value="mRNA"/>
</dbReference>
<dbReference type="EMBL" id="BT002175">
    <property type="protein sequence ID" value="AAN72186.1"/>
    <property type="molecule type" value="mRNA"/>
</dbReference>
<dbReference type="PIR" id="T52143">
    <property type="entry name" value="T52143"/>
</dbReference>
<dbReference type="RefSeq" id="NP_568478.1">
    <property type="nucleotide sequence ID" value="NM_122490.4"/>
</dbReference>
<dbReference type="SMR" id="Q9XFM0"/>
<dbReference type="BioGRID" id="17933">
    <property type="interactions" value="58"/>
</dbReference>
<dbReference type="ELM" id="Q9XFM0"/>
<dbReference type="FunCoup" id="Q9XFM0">
    <property type="interactions" value="295"/>
</dbReference>
<dbReference type="IntAct" id="Q9XFM0">
    <property type="interactions" value="55"/>
</dbReference>
<dbReference type="STRING" id="3702.Q9XFM0"/>
<dbReference type="PaxDb" id="3702-AT5G25890.1"/>
<dbReference type="EnsemblPlants" id="AT5G25890.1">
    <property type="protein sequence ID" value="AT5G25890.1"/>
    <property type="gene ID" value="AT5G25890"/>
</dbReference>
<dbReference type="GeneID" id="832658"/>
<dbReference type="Gramene" id="AT5G25890.1">
    <property type="protein sequence ID" value="AT5G25890.1"/>
    <property type="gene ID" value="AT5G25890"/>
</dbReference>
<dbReference type="KEGG" id="ath:AT5G25890"/>
<dbReference type="Araport" id="AT5G25890"/>
<dbReference type="TAIR" id="AT5G25890">
    <property type="gene designation" value="IAA28"/>
</dbReference>
<dbReference type="eggNOG" id="ENOG502R4CB">
    <property type="taxonomic scope" value="Eukaryota"/>
</dbReference>
<dbReference type="HOGENOM" id="CLU_049393_2_2_1"/>
<dbReference type="InParanoid" id="Q9XFM0"/>
<dbReference type="OMA" id="FSKKDSW"/>
<dbReference type="OrthoDB" id="615826at2759"/>
<dbReference type="PhylomeDB" id="Q9XFM0"/>
<dbReference type="PRO" id="PR:Q9XFM0"/>
<dbReference type="Proteomes" id="UP000006548">
    <property type="component" value="Chromosome 5"/>
</dbReference>
<dbReference type="ExpressionAtlas" id="Q9XFM0">
    <property type="expression patterns" value="baseline and differential"/>
</dbReference>
<dbReference type="GO" id="GO:0005634">
    <property type="term" value="C:nucleus"/>
    <property type="evidence" value="ECO:0007669"/>
    <property type="project" value="UniProtKB-SubCell"/>
</dbReference>
<dbReference type="GO" id="GO:0003700">
    <property type="term" value="F:DNA-binding transcription factor activity"/>
    <property type="evidence" value="ECO:0000250"/>
    <property type="project" value="TAIR"/>
</dbReference>
<dbReference type="GO" id="GO:0042802">
    <property type="term" value="F:identical protein binding"/>
    <property type="evidence" value="ECO:0000353"/>
    <property type="project" value="IntAct"/>
</dbReference>
<dbReference type="GO" id="GO:0000976">
    <property type="term" value="F:transcription cis-regulatory region binding"/>
    <property type="evidence" value="ECO:0000353"/>
    <property type="project" value="TAIR"/>
</dbReference>
<dbReference type="GO" id="GO:0009734">
    <property type="term" value="P:auxin-activated signaling pathway"/>
    <property type="evidence" value="ECO:0007669"/>
    <property type="project" value="UniProtKB-KW"/>
</dbReference>
<dbReference type="GO" id="GO:0010102">
    <property type="term" value="P:lateral root morphogenesis"/>
    <property type="evidence" value="ECO:0000315"/>
    <property type="project" value="TAIR"/>
</dbReference>
<dbReference type="GO" id="GO:0009733">
    <property type="term" value="P:response to auxin"/>
    <property type="evidence" value="ECO:0000315"/>
    <property type="project" value="TAIR"/>
</dbReference>
<dbReference type="FunFam" id="3.10.20.90:FF:000225">
    <property type="entry name" value="Auxin-responsive protein"/>
    <property type="match status" value="1"/>
</dbReference>
<dbReference type="Gene3D" id="3.10.20.90">
    <property type="entry name" value="Phosphatidylinositol 3-kinase Catalytic Subunit, Chain A, domain 1"/>
    <property type="match status" value="1"/>
</dbReference>
<dbReference type="InterPro" id="IPR033389">
    <property type="entry name" value="AUX/IAA_dom"/>
</dbReference>
<dbReference type="InterPro" id="IPR003311">
    <property type="entry name" value="AUX_IAA"/>
</dbReference>
<dbReference type="InterPro" id="IPR053793">
    <property type="entry name" value="PB1-like"/>
</dbReference>
<dbReference type="PANTHER" id="PTHR31734">
    <property type="entry name" value="AUXIN-RESPONSIVE PROTEIN IAA17"/>
    <property type="match status" value="1"/>
</dbReference>
<dbReference type="PANTHER" id="PTHR31734:SF134">
    <property type="entry name" value="AUXIN-RESPONSIVE PROTEIN IAA28"/>
    <property type="match status" value="1"/>
</dbReference>
<dbReference type="Pfam" id="PF02309">
    <property type="entry name" value="AUX_IAA"/>
    <property type="match status" value="2"/>
</dbReference>
<dbReference type="SUPFAM" id="SSF54277">
    <property type="entry name" value="CAD &amp; PB1 domains"/>
    <property type="match status" value="1"/>
</dbReference>
<dbReference type="PROSITE" id="PS51745">
    <property type="entry name" value="PB1"/>
    <property type="match status" value="1"/>
</dbReference>
<accession>Q9XFM0</accession>
<accession>Q9S9V6</accession>
<protein>
    <recommendedName>
        <fullName>Auxin-responsive protein IAA28</fullName>
    </recommendedName>
    <alternativeName>
        <fullName>Indoleacetic acid-induced protein 28</fullName>
    </alternativeName>
</protein>
<reference key="1">
    <citation type="journal article" date="2001" name="Plant Cell">
        <title>A gain-of-function mutation in IAA28 suppresses lateral root development.</title>
        <authorList>
            <person name="Rogg L.E."/>
            <person name="Lasswell J.E."/>
            <person name="Bartel B."/>
        </authorList>
    </citation>
    <scope>NUCLEOTIDE SEQUENCE [MRNA]</scope>
    <scope>MUTANT IAA28-1</scope>
    <source>
        <strain>cv. Columbia</strain>
    </source>
</reference>
<reference key="2">
    <citation type="journal article" date="2000" name="Nature">
        <title>Sequence and analysis of chromosome 5 of the plant Arabidopsis thaliana.</title>
        <authorList>
            <person name="Tabata S."/>
            <person name="Kaneko T."/>
            <person name="Nakamura Y."/>
            <person name="Kotani H."/>
            <person name="Kato T."/>
            <person name="Asamizu E."/>
            <person name="Miyajima N."/>
            <person name="Sasamoto S."/>
            <person name="Kimura T."/>
            <person name="Hosouchi T."/>
            <person name="Kawashima K."/>
            <person name="Kohara M."/>
            <person name="Matsumoto M."/>
            <person name="Matsuno A."/>
            <person name="Muraki A."/>
            <person name="Nakayama S."/>
            <person name="Nakazaki N."/>
            <person name="Naruo K."/>
            <person name="Okumura S."/>
            <person name="Shinpo S."/>
            <person name="Takeuchi C."/>
            <person name="Wada T."/>
            <person name="Watanabe A."/>
            <person name="Yamada M."/>
            <person name="Yasuda M."/>
            <person name="Sato S."/>
            <person name="de la Bastide M."/>
            <person name="Huang E."/>
            <person name="Spiegel L."/>
            <person name="Gnoj L."/>
            <person name="O'Shaughnessy A."/>
            <person name="Preston R."/>
            <person name="Habermann K."/>
            <person name="Murray J."/>
            <person name="Johnson D."/>
            <person name="Rohlfing T."/>
            <person name="Nelson J."/>
            <person name="Stoneking T."/>
            <person name="Pepin K."/>
            <person name="Spieth J."/>
            <person name="Sekhon M."/>
            <person name="Armstrong J."/>
            <person name="Becker M."/>
            <person name="Belter E."/>
            <person name="Cordum H."/>
            <person name="Cordes M."/>
            <person name="Courtney L."/>
            <person name="Courtney W."/>
            <person name="Dante M."/>
            <person name="Du H."/>
            <person name="Edwards J."/>
            <person name="Fryman J."/>
            <person name="Haakensen B."/>
            <person name="Lamar E."/>
            <person name="Latreille P."/>
            <person name="Leonard S."/>
            <person name="Meyer R."/>
            <person name="Mulvaney E."/>
            <person name="Ozersky P."/>
            <person name="Riley A."/>
            <person name="Strowmatt C."/>
            <person name="Wagner-McPherson C."/>
            <person name="Wollam A."/>
            <person name="Yoakum M."/>
            <person name="Bell M."/>
            <person name="Dedhia N."/>
            <person name="Parnell L."/>
            <person name="Shah R."/>
            <person name="Rodriguez M."/>
            <person name="Hoon See L."/>
            <person name="Vil D."/>
            <person name="Baker J."/>
            <person name="Kirchoff K."/>
            <person name="Toth K."/>
            <person name="King L."/>
            <person name="Bahret A."/>
            <person name="Miller B."/>
            <person name="Marra M.A."/>
            <person name="Martienssen R."/>
            <person name="McCombie W.R."/>
            <person name="Wilson R.K."/>
            <person name="Murphy G."/>
            <person name="Bancroft I."/>
            <person name="Volckaert G."/>
            <person name="Wambutt R."/>
            <person name="Duesterhoeft A."/>
            <person name="Stiekema W."/>
            <person name="Pohl T."/>
            <person name="Entian K.-D."/>
            <person name="Terryn N."/>
            <person name="Hartley N."/>
            <person name="Bent E."/>
            <person name="Johnson S."/>
            <person name="Langham S.-A."/>
            <person name="McCullagh B."/>
            <person name="Robben J."/>
            <person name="Grymonprez B."/>
            <person name="Zimmermann W."/>
            <person name="Ramsperger U."/>
            <person name="Wedler H."/>
            <person name="Balke K."/>
            <person name="Wedler E."/>
            <person name="Peters S."/>
            <person name="van Staveren M."/>
            <person name="Dirkse W."/>
            <person name="Mooijman P."/>
            <person name="Klein Lankhorst R."/>
            <person name="Weitzenegger T."/>
            <person name="Bothe G."/>
            <person name="Rose M."/>
            <person name="Hauf J."/>
            <person name="Berneiser S."/>
            <person name="Hempel S."/>
            <person name="Feldpausch M."/>
            <person name="Lamberth S."/>
            <person name="Villarroel R."/>
            <person name="Gielen J."/>
            <person name="Ardiles W."/>
            <person name="Bents O."/>
            <person name="Lemcke K."/>
            <person name="Kolesov G."/>
            <person name="Mayer K.F.X."/>
            <person name="Rudd S."/>
            <person name="Schoof H."/>
            <person name="Schueller C."/>
            <person name="Zaccaria P."/>
            <person name="Mewes H.-W."/>
            <person name="Bevan M."/>
            <person name="Fransz P.F."/>
        </authorList>
    </citation>
    <scope>NUCLEOTIDE SEQUENCE [LARGE SCALE GENOMIC DNA]</scope>
    <source>
        <strain>cv. Columbia</strain>
    </source>
</reference>
<reference key="3">
    <citation type="journal article" date="2017" name="Plant J.">
        <title>Araport11: a complete reannotation of the Arabidopsis thaliana reference genome.</title>
        <authorList>
            <person name="Cheng C.Y."/>
            <person name="Krishnakumar V."/>
            <person name="Chan A.P."/>
            <person name="Thibaud-Nissen F."/>
            <person name="Schobel S."/>
            <person name="Town C.D."/>
        </authorList>
    </citation>
    <scope>GENOME REANNOTATION</scope>
    <source>
        <strain>cv. Columbia</strain>
    </source>
</reference>
<reference key="4">
    <citation type="journal article" date="2003" name="Science">
        <title>Empirical analysis of transcriptional activity in the Arabidopsis genome.</title>
        <authorList>
            <person name="Yamada K."/>
            <person name="Lim J."/>
            <person name="Dale J.M."/>
            <person name="Chen H."/>
            <person name="Shinn P."/>
            <person name="Palm C.J."/>
            <person name="Southwick A.M."/>
            <person name="Wu H.C."/>
            <person name="Kim C.J."/>
            <person name="Nguyen M."/>
            <person name="Pham P.K."/>
            <person name="Cheuk R.F."/>
            <person name="Karlin-Newmann G."/>
            <person name="Liu S.X."/>
            <person name="Lam B."/>
            <person name="Sakano H."/>
            <person name="Wu T."/>
            <person name="Yu G."/>
            <person name="Miranda M."/>
            <person name="Quach H.L."/>
            <person name="Tripp M."/>
            <person name="Chang C.H."/>
            <person name="Lee J.M."/>
            <person name="Toriumi M.J."/>
            <person name="Chan M.M."/>
            <person name="Tang C.C."/>
            <person name="Onodera C.S."/>
            <person name="Deng J.M."/>
            <person name="Akiyama K."/>
            <person name="Ansari Y."/>
            <person name="Arakawa T."/>
            <person name="Banh J."/>
            <person name="Banno F."/>
            <person name="Bowser L."/>
            <person name="Brooks S.Y."/>
            <person name="Carninci P."/>
            <person name="Chao Q."/>
            <person name="Choy N."/>
            <person name="Enju A."/>
            <person name="Goldsmith A.D."/>
            <person name="Gurjal M."/>
            <person name="Hansen N.F."/>
            <person name="Hayashizaki Y."/>
            <person name="Johnson-Hopson C."/>
            <person name="Hsuan V.W."/>
            <person name="Iida K."/>
            <person name="Karnes M."/>
            <person name="Khan S."/>
            <person name="Koesema E."/>
            <person name="Ishida J."/>
            <person name="Jiang P.X."/>
            <person name="Jones T."/>
            <person name="Kawai J."/>
            <person name="Kamiya A."/>
            <person name="Meyers C."/>
            <person name="Nakajima M."/>
            <person name="Narusaka M."/>
            <person name="Seki M."/>
            <person name="Sakurai T."/>
            <person name="Satou M."/>
            <person name="Tamse R."/>
            <person name="Vaysberg M."/>
            <person name="Wallender E.K."/>
            <person name="Wong C."/>
            <person name="Yamamura Y."/>
            <person name="Yuan S."/>
            <person name="Shinozaki K."/>
            <person name="Davis R.W."/>
            <person name="Theologis A."/>
            <person name="Ecker J.R."/>
        </authorList>
    </citation>
    <scope>NUCLEOTIDE SEQUENCE [LARGE SCALE MRNA]</scope>
    <source>
        <strain>cv. Columbia</strain>
    </source>
</reference>
<reference key="5">
    <citation type="journal article" date="2002" name="Plant Mol. Biol.">
        <title>Genetics of Aux/IAA and ARF action in plant growth and development.</title>
        <authorList>
            <person name="Liscum E."/>
            <person name="Reed J.W."/>
        </authorList>
    </citation>
    <scope>GENE FAMILY</scope>
    <scope>NOMENCLATURE</scope>
    <scope>FUNCTION</scope>
</reference>
<reference key="6">
    <citation type="journal article" date="2004" name="Plant Cell">
        <title>Aux/IAA proteins contain a potent transcriptional repression domain.</title>
        <authorList>
            <person name="Tiwari S.B."/>
            <person name="Hagen G."/>
            <person name="Guilfoyle T.J."/>
        </authorList>
    </citation>
    <scope>TRANSCRIPTIONAL REPRESSION DOMAIN</scope>
</reference>
<reference key="7">
    <citation type="journal article" date="2008" name="Science">
        <title>TOPLESS mediates auxin-dependent transcriptional repression during Arabidopsis embryogenesis.</title>
        <authorList>
            <person name="Szemenyei H."/>
            <person name="Hannon M."/>
            <person name="Long J.A."/>
        </authorList>
    </citation>
    <scope>INTERACTION WITH TPL</scope>
</reference>
<gene>
    <name type="primary">IAA28</name>
    <name type="ordered locus">At5g25890</name>
    <name type="ORF">F18A17.6</name>
    <name type="ORF">T1N24.24</name>
</gene>
<sequence length="175" mass="20206">MEEEKRLELRLAPPCHQFTSNNNINGSKQKSSTKETSFLSNNRVEVAPVVGWPPVRSSRRNLTAQLKEEMKKKESDEEKELYVKINMEGVPIGRKVNLSAYNNYQQLSHAVDQLFSKKDSWDLNRQYTLVYEDTEGDKVLVGDVPWEMFVSTVKRLHVLKTSHAFSLSPRKHGKE</sequence>
<keyword id="KW-0927">Auxin signaling pathway</keyword>
<keyword id="KW-0539">Nucleus</keyword>
<keyword id="KW-1185">Reference proteome</keyword>
<keyword id="KW-0678">Repressor</keyword>
<keyword id="KW-0804">Transcription</keyword>
<keyword id="KW-0805">Transcription regulation</keyword>
<name>IAA28_ARATH</name>
<organism>
    <name type="scientific">Arabidopsis thaliana</name>
    <name type="common">Mouse-ear cress</name>
    <dbReference type="NCBI Taxonomy" id="3702"/>
    <lineage>
        <taxon>Eukaryota</taxon>
        <taxon>Viridiplantae</taxon>
        <taxon>Streptophyta</taxon>
        <taxon>Embryophyta</taxon>
        <taxon>Tracheophyta</taxon>
        <taxon>Spermatophyta</taxon>
        <taxon>Magnoliopsida</taxon>
        <taxon>eudicotyledons</taxon>
        <taxon>Gunneridae</taxon>
        <taxon>Pentapetalae</taxon>
        <taxon>rosids</taxon>
        <taxon>malvids</taxon>
        <taxon>Brassicales</taxon>
        <taxon>Brassicaceae</taxon>
        <taxon>Camelineae</taxon>
        <taxon>Arabidopsis</taxon>
    </lineage>
</organism>
<evidence type="ECO:0000250" key="1"/>
<evidence type="ECO:0000255" key="2">
    <source>
        <dbReference type="PROSITE-ProRule" id="PRU01081"/>
    </source>
</evidence>
<evidence type="ECO:0000256" key="3">
    <source>
        <dbReference type="SAM" id="MobiDB-lite"/>
    </source>
</evidence>
<evidence type="ECO:0000269" key="4">
    <source>
    </source>
</evidence>
<evidence type="ECO:0000269" key="5">
    <source>
    </source>
</evidence>
<evidence type="ECO:0000305" key="6"/>